<organism>
    <name type="scientific">Thermosynechococcus vestitus (strain NIES-2133 / IAM M-273 / BP-1)</name>
    <dbReference type="NCBI Taxonomy" id="197221"/>
    <lineage>
        <taxon>Bacteria</taxon>
        <taxon>Bacillati</taxon>
        <taxon>Cyanobacteriota</taxon>
        <taxon>Cyanophyceae</taxon>
        <taxon>Acaryochloridales</taxon>
        <taxon>Thermosynechococcaceae</taxon>
        <taxon>Thermosynechococcus</taxon>
    </lineage>
</organism>
<accession>Q8DJ40</accession>
<gene>
    <name type="primary">clpB1</name>
    <name type="ordered locus">tlr1389</name>
</gene>
<comment type="function">
    <text evidence="1">Part of a stress-induced multi-chaperone system, it is involved in the recovery of the cell from heat-induced damage, in cooperation with DnaK, DnaJ and GrpE. Acts before DnaK, in the processing of protein aggregates. Protein binding stimulates the ATPase activity; ATP hydrolysis unfolds the denatured protein aggregates, which probably helps expose new hydrophobic binding sites on the surface of ClpB-bound aggregates, contributing to the solubilization and refolding of denatured protein aggregates by DnaK (By similarity).</text>
</comment>
<comment type="subunit">
    <text evidence="1">Homohexamer. The oligomerization is ATP-dependent (By similarity).</text>
</comment>
<comment type="subcellular location">
    <subcellularLocation>
        <location evidence="3">Cytoplasm</location>
    </subcellularLocation>
</comment>
<comment type="domain">
    <text evidence="1">The Clp repeat (R) domain probably functions as a substrate-discriminating domain, recruiting aggregated proteins to the ClpB hexamer and/or stabilizing bound proteins. The NBD2 domain is responsible for oligomerization, whereas the NBD1 domain stabilizes the hexamer probably in an ATP-dependent manner. The movement of the coiled-coil domain is essential for ClpB ability to rescue proteins from an aggregated state, probably by pulling apart large aggregated proteins, which are bound between the coiled-coils motifs of adjacent ClpB subunits in the functional hexamer (By similarity).</text>
</comment>
<comment type="similarity">
    <text evidence="3">Belongs to the ClpA/ClpB family.</text>
</comment>
<sequence length="871" mass="98389">MQPSNPNQFTEKAWAAIARTPDLAKQAQHQNLESEHLMKSLLEQEGLATQIFQKAGCSVQRIRDLTDEFISRQPKISHPSGVYLGQSLDKLLDRAEEARKQFGDEFISIEHLVLAFAQDDRFGKKLFQDIGLSEKVLREAIQQIRGSQKVTDQNPEGKYAALEKYGRDLTLLARQGKLDPVIGRDDEIRRVIQILSRRTKNNPVLIGEPGVGKTAIAEGLAQRIVARDVPDSLRDRQLIALDMGALIAGAKYRGEFEERLKAVLKEVTDSNGQIILFIDEIHTVVGAGATQGAMDAGNLLKPMLARGELRCIGATTLDEYRKYIEKDAALERRFQQVYVDQPSVEDTISILRGLKERYEIHHGVKISDTALVAAATLSARYISDRFLPDKAIDLVDEAAAKLKMEITSKPEELDEIDRKILQLEMERLSLQKETSAASRDRLEKLERELADLKEEQSRLNAQWQAEKEVIDRLQSIKEEIEKVNIEIQQAERNYDLNRAAELKYGKLTELHKKLAEAEAKLREIQVGGRSLLRDEVTEADIAEIISKWTGIPVSKLVESEAQKLLHLEEELHKRVVGQDEAVSAVAEAIQRSRAGLADPNRPIASFIFLGPTGVGKTELAKALAAFMFDTEEALVRIDMSEYMEKHAVSRLIGAPPGYVGYDEGGQLTEAIRRRPYAVVLFDEIEKAHPDVFNVFLQILDDGRVTDSQGRTVDFKNTIIIMTSNIGSQYILDVAGDDSRYSEMYNRVMEAMRAHFRPEFLNRVDEFIIFHSLRKDQLRQIVQLQVQRLQQRLSDRHITLSLTEKAIDFLAEVGYDPVYGARPLKRAIQKQLETPIAKAILRGDFFDGDTILVDVGEDERLSFRRQVELATV</sequence>
<reference key="1">
    <citation type="journal article" date="2002" name="DNA Res.">
        <title>Complete genome structure of the thermophilic cyanobacterium Thermosynechococcus elongatus BP-1.</title>
        <authorList>
            <person name="Nakamura Y."/>
            <person name="Kaneko T."/>
            <person name="Sato S."/>
            <person name="Ikeuchi M."/>
            <person name="Katoh H."/>
            <person name="Sasamoto S."/>
            <person name="Watanabe A."/>
            <person name="Iriguchi M."/>
            <person name="Kawashima K."/>
            <person name="Kimura T."/>
            <person name="Kishida Y."/>
            <person name="Kiyokawa C."/>
            <person name="Kohara M."/>
            <person name="Matsumoto M."/>
            <person name="Matsuno A."/>
            <person name="Nakazaki N."/>
            <person name="Shimpo S."/>
            <person name="Sugimoto M."/>
            <person name="Takeuchi C."/>
            <person name="Yamada M."/>
            <person name="Tabata S."/>
        </authorList>
    </citation>
    <scope>NUCLEOTIDE SEQUENCE [LARGE SCALE GENOMIC DNA]</scope>
    <source>
        <strain>NIES-2133 / IAM M-273 / BP-1</strain>
    </source>
</reference>
<name>CLPB1_THEVB</name>
<protein>
    <recommendedName>
        <fullName>Chaperone protein ClpB 1</fullName>
    </recommendedName>
</protein>
<dbReference type="EMBL" id="BA000039">
    <property type="protein sequence ID" value="BAC08941.1"/>
    <property type="molecule type" value="Genomic_DNA"/>
</dbReference>
<dbReference type="RefSeq" id="NP_682179.1">
    <property type="nucleotide sequence ID" value="NC_004113.1"/>
</dbReference>
<dbReference type="RefSeq" id="WP_011057229.1">
    <property type="nucleotide sequence ID" value="NC_004113.1"/>
</dbReference>
<dbReference type="SMR" id="Q8DJ40"/>
<dbReference type="STRING" id="197221.gene:10747987"/>
<dbReference type="EnsemblBacteria" id="BAC08941">
    <property type="protein sequence ID" value="BAC08941"/>
    <property type="gene ID" value="BAC08941"/>
</dbReference>
<dbReference type="KEGG" id="tel:tlr1389"/>
<dbReference type="PATRIC" id="fig|197221.4.peg.1461"/>
<dbReference type="eggNOG" id="COG0542">
    <property type="taxonomic scope" value="Bacteria"/>
</dbReference>
<dbReference type="Proteomes" id="UP000000440">
    <property type="component" value="Chromosome"/>
</dbReference>
<dbReference type="GO" id="GO:0005737">
    <property type="term" value="C:cytoplasm"/>
    <property type="evidence" value="ECO:0007669"/>
    <property type="project" value="UniProtKB-SubCell"/>
</dbReference>
<dbReference type="GO" id="GO:0005524">
    <property type="term" value="F:ATP binding"/>
    <property type="evidence" value="ECO:0007669"/>
    <property type="project" value="UniProtKB-KW"/>
</dbReference>
<dbReference type="GO" id="GO:0016887">
    <property type="term" value="F:ATP hydrolysis activity"/>
    <property type="evidence" value="ECO:0007669"/>
    <property type="project" value="InterPro"/>
</dbReference>
<dbReference type="GO" id="GO:0034605">
    <property type="term" value="P:cellular response to heat"/>
    <property type="evidence" value="ECO:0007669"/>
    <property type="project" value="TreeGrafter"/>
</dbReference>
<dbReference type="GO" id="GO:0042026">
    <property type="term" value="P:protein refolding"/>
    <property type="evidence" value="ECO:0007669"/>
    <property type="project" value="InterPro"/>
</dbReference>
<dbReference type="CDD" id="cd00009">
    <property type="entry name" value="AAA"/>
    <property type="match status" value="1"/>
</dbReference>
<dbReference type="CDD" id="cd19499">
    <property type="entry name" value="RecA-like_ClpB_Hsp104-like"/>
    <property type="match status" value="1"/>
</dbReference>
<dbReference type="FunFam" id="1.10.8.60:FF:000017">
    <property type="entry name" value="ATP-dependent chaperone ClpB"/>
    <property type="match status" value="1"/>
</dbReference>
<dbReference type="FunFam" id="3.40.50.300:FF:000120">
    <property type="entry name" value="ATP-dependent chaperone ClpB"/>
    <property type="match status" value="1"/>
</dbReference>
<dbReference type="FunFam" id="3.40.50.300:FF:000025">
    <property type="entry name" value="ATP-dependent Clp protease subunit"/>
    <property type="match status" value="1"/>
</dbReference>
<dbReference type="FunFam" id="3.40.50.300:FF:000010">
    <property type="entry name" value="Chaperone clpB 1, putative"/>
    <property type="match status" value="1"/>
</dbReference>
<dbReference type="Gene3D" id="1.10.8.60">
    <property type="match status" value="1"/>
</dbReference>
<dbReference type="Gene3D" id="1.10.1780.10">
    <property type="entry name" value="Clp, N-terminal domain"/>
    <property type="match status" value="1"/>
</dbReference>
<dbReference type="Gene3D" id="3.40.50.300">
    <property type="entry name" value="P-loop containing nucleotide triphosphate hydrolases"/>
    <property type="match status" value="3"/>
</dbReference>
<dbReference type="InterPro" id="IPR003593">
    <property type="entry name" value="AAA+_ATPase"/>
</dbReference>
<dbReference type="InterPro" id="IPR003959">
    <property type="entry name" value="ATPase_AAA_core"/>
</dbReference>
<dbReference type="InterPro" id="IPR017730">
    <property type="entry name" value="Chaperonin_ClpB"/>
</dbReference>
<dbReference type="InterPro" id="IPR019489">
    <property type="entry name" value="Clp_ATPase_C"/>
</dbReference>
<dbReference type="InterPro" id="IPR036628">
    <property type="entry name" value="Clp_N_dom_sf"/>
</dbReference>
<dbReference type="InterPro" id="IPR004176">
    <property type="entry name" value="Clp_R_dom"/>
</dbReference>
<dbReference type="InterPro" id="IPR001270">
    <property type="entry name" value="ClpA/B"/>
</dbReference>
<dbReference type="InterPro" id="IPR018368">
    <property type="entry name" value="ClpA/B_CS1"/>
</dbReference>
<dbReference type="InterPro" id="IPR028299">
    <property type="entry name" value="ClpA/B_CS2"/>
</dbReference>
<dbReference type="InterPro" id="IPR041546">
    <property type="entry name" value="ClpA/ClpB_AAA_lid"/>
</dbReference>
<dbReference type="InterPro" id="IPR050130">
    <property type="entry name" value="ClpA_ClpB"/>
</dbReference>
<dbReference type="InterPro" id="IPR027417">
    <property type="entry name" value="P-loop_NTPase"/>
</dbReference>
<dbReference type="NCBIfam" id="TIGR03346">
    <property type="entry name" value="chaperone_ClpB"/>
    <property type="match status" value="1"/>
</dbReference>
<dbReference type="PANTHER" id="PTHR11638">
    <property type="entry name" value="ATP-DEPENDENT CLP PROTEASE"/>
    <property type="match status" value="1"/>
</dbReference>
<dbReference type="PANTHER" id="PTHR11638:SF18">
    <property type="entry name" value="HEAT SHOCK PROTEIN 104"/>
    <property type="match status" value="1"/>
</dbReference>
<dbReference type="Pfam" id="PF00004">
    <property type="entry name" value="AAA"/>
    <property type="match status" value="1"/>
</dbReference>
<dbReference type="Pfam" id="PF07724">
    <property type="entry name" value="AAA_2"/>
    <property type="match status" value="1"/>
</dbReference>
<dbReference type="Pfam" id="PF17871">
    <property type="entry name" value="AAA_lid_9"/>
    <property type="match status" value="1"/>
</dbReference>
<dbReference type="Pfam" id="PF02861">
    <property type="entry name" value="Clp_N"/>
    <property type="match status" value="2"/>
</dbReference>
<dbReference type="Pfam" id="PF10431">
    <property type="entry name" value="ClpB_D2-small"/>
    <property type="match status" value="1"/>
</dbReference>
<dbReference type="PRINTS" id="PR00300">
    <property type="entry name" value="CLPPROTEASEA"/>
</dbReference>
<dbReference type="SMART" id="SM00382">
    <property type="entry name" value="AAA"/>
    <property type="match status" value="2"/>
</dbReference>
<dbReference type="SMART" id="SM01086">
    <property type="entry name" value="ClpB_D2-small"/>
    <property type="match status" value="1"/>
</dbReference>
<dbReference type="SUPFAM" id="SSF81923">
    <property type="entry name" value="Double Clp-N motif"/>
    <property type="match status" value="1"/>
</dbReference>
<dbReference type="SUPFAM" id="SSF52540">
    <property type="entry name" value="P-loop containing nucleoside triphosphate hydrolases"/>
    <property type="match status" value="2"/>
</dbReference>
<dbReference type="PROSITE" id="PS51903">
    <property type="entry name" value="CLP_R"/>
    <property type="match status" value="1"/>
</dbReference>
<dbReference type="PROSITE" id="PS00870">
    <property type="entry name" value="CLPAB_1"/>
    <property type="match status" value="1"/>
</dbReference>
<dbReference type="PROSITE" id="PS00871">
    <property type="entry name" value="CLPAB_2"/>
    <property type="match status" value="1"/>
</dbReference>
<proteinExistence type="inferred from homology"/>
<feature type="chain" id="PRO_0000191187" description="Chaperone protein ClpB 1">
    <location>
        <begin position="1"/>
        <end position="871"/>
    </location>
</feature>
<feature type="domain" description="Clp R" evidence="2">
    <location>
        <begin position="6"/>
        <end position="147"/>
    </location>
</feature>
<feature type="region of interest" description="Repeat 1" evidence="2">
    <location>
        <begin position="9"/>
        <end position="73"/>
    </location>
</feature>
<feature type="region of interest" description="Repeat 2" evidence="2">
    <location>
        <begin position="84"/>
        <end position="147"/>
    </location>
</feature>
<feature type="region of interest" description="NBD1" evidence="1">
    <location>
        <begin position="160"/>
        <end position="341"/>
    </location>
</feature>
<feature type="region of interest" description="Linker" evidence="1">
    <location>
        <begin position="342"/>
        <end position="550"/>
    </location>
</feature>
<feature type="region of interest" description="NBD2" evidence="1">
    <location>
        <begin position="560"/>
        <end position="771"/>
    </location>
</feature>
<feature type="region of interest" description="C-terminal" evidence="1">
    <location>
        <begin position="772"/>
        <end position="871"/>
    </location>
</feature>
<feature type="coiled-coil region" evidence="1">
    <location>
        <begin position="392"/>
        <end position="526"/>
    </location>
</feature>
<feature type="binding site" evidence="1">
    <location>
        <begin position="207"/>
        <end position="214"/>
    </location>
    <ligand>
        <name>ATP</name>
        <dbReference type="ChEBI" id="CHEBI:30616"/>
        <label>1</label>
    </ligand>
</feature>
<feature type="binding site" evidence="1">
    <location>
        <begin position="610"/>
        <end position="617"/>
    </location>
    <ligand>
        <name>ATP</name>
        <dbReference type="ChEBI" id="CHEBI:30616"/>
        <label>2</label>
    </ligand>
</feature>
<evidence type="ECO:0000250" key="1"/>
<evidence type="ECO:0000255" key="2">
    <source>
        <dbReference type="PROSITE-ProRule" id="PRU01251"/>
    </source>
</evidence>
<evidence type="ECO:0000305" key="3"/>
<keyword id="KW-0067">ATP-binding</keyword>
<keyword id="KW-0143">Chaperone</keyword>
<keyword id="KW-0175">Coiled coil</keyword>
<keyword id="KW-0963">Cytoplasm</keyword>
<keyword id="KW-0547">Nucleotide-binding</keyword>
<keyword id="KW-1185">Reference proteome</keyword>
<keyword id="KW-0677">Repeat</keyword>
<keyword id="KW-0346">Stress response</keyword>